<gene>
    <name evidence="1" type="primary">mutH</name>
    <name type="ordered locus">Swoo_1226</name>
</gene>
<protein>
    <recommendedName>
        <fullName evidence="1">DNA mismatch repair protein MutH</fullName>
    </recommendedName>
    <alternativeName>
        <fullName evidence="1">Methyl-directed mismatch repair protein</fullName>
    </alternativeName>
</protein>
<keyword id="KW-0963">Cytoplasm</keyword>
<keyword id="KW-0227">DNA damage</keyword>
<keyword id="KW-0234">DNA repair</keyword>
<keyword id="KW-0255">Endonuclease</keyword>
<keyword id="KW-0378">Hydrolase</keyword>
<keyword id="KW-0540">Nuclease</keyword>
<keyword id="KW-1185">Reference proteome</keyword>
<name>MUTH_SHEWM</name>
<organism>
    <name type="scientific">Shewanella woodyi (strain ATCC 51908 / MS32)</name>
    <dbReference type="NCBI Taxonomy" id="392500"/>
    <lineage>
        <taxon>Bacteria</taxon>
        <taxon>Pseudomonadati</taxon>
        <taxon>Pseudomonadota</taxon>
        <taxon>Gammaproteobacteria</taxon>
        <taxon>Alteromonadales</taxon>
        <taxon>Shewanellaceae</taxon>
        <taxon>Shewanella</taxon>
    </lineage>
</organism>
<feature type="chain" id="PRO_1000133477" description="DNA mismatch repair protein MutH">
    <location>
        <begin position="1"/>
        <end position="231"/>
    </location>
</feature>
<proteinExistence type="inferred from homology"/>
<comment type="function">
    <text evidence="1">Sequence-specific endonuclease that cleaves unmethylated GATC sequences. It is involved in DNA mismatch repair.</text>
</comment>
<comment type="subcellular location">
    <subcellularLocation>
        <location evidence="1">Cytoplasm</location>
    </subcellularLocation>
</comment>
<comment type="similarity">
    <text evidence="1">Belongs to the MutH family.</text>
</comment>
<reference key="1">
    <citation type="submission" date="2008-02" db="EMBL/GenBank/DDBJ databases">
        <title>Complete sequence of Shewanella woodyi ATCC 51908.</title>
        <authorList>
            <consortium name="US DOE Joint Genome Institute"/>
            <person name="Copeland A."/>
            <person name="Lucas S."/>
            <person name="Lapidus A."/>
            <person name="Glavina del Rio T."/>
            <person name="Dalin E."/>
            <person name="Tice H."/>
            <person name="Bruce D."/>
            <person name="Goodwin L."/>
            <person name="Pitluck S."/>
            <person name="Sims D."/>
            <person name="Brettin T."/>
            <person name="Detter J.C."/>
            <person name="Han C."/>
            <person name="Kuske C.R."/>
            <person name="Schmutz J."/>
            <person name="Larimer F."/>
            <person name="Land M."/>
            <person name="Hauser L."/>
            <person name="Kyrpides N."/>
            <person name="Lykidis A."/>
            <person name="Zhao J.-S."/>
            <person name="Richardson P."/>
        </authorList>
    </citation>
    <scope>NUCLEOTIDE SEQUENCE [LARGE SCALE GENOMIC DNA]</scope>
    <source>
        <strain>ATCC 51908 / MS32</strain>
    </source>
</reference>
<evidence type="ECO:0000255" key="1">
    <source>
        <dbReference type="HAMAP-Rule" id="MF_00759"/>
    </source>
</evidence>
<dbReference type="EMBL" id="CP000961">
    <property type="protein sequence ID" value="ACA85519.1"/>
    <property type="molecule type" value="Genomic_DNA"/>
</dbReference>
<dbReference type="RefSeq" id="WP_012323865.1">
    <property type="nucleotide sequence ID" value="NC_010506.1"/>
</dbReference>
<dbReference type="SMR" id="B1KI41"/>
<dbReference type="STRING" id="392500.Swoo_1226"/>
<dbReference type="KEGG" id="swd:Swoo_1226"/>
<dbReference type="eggNOG" id="COG3066">
    <property type="taxonomic scope" value="Bacteria"/>
</dbReference>
<dbReference type="HOGENOM" id="CLU_086669_0_0_6"/>
<dbReference type="Proteomes" id="UP000002168">
    <property type="component" value="Chromosome"/>
</dbReference>
<dbReference type="GO" id="GO:0005737">
    <property type="term" value="C:cytoplasm"/>
    <property type="evidence" value="ECO:0007669"/>
    <property type="project" value="UniProtKB-SubCell"/>
</dbReference>
<dbReference type="GO" id="GO:0003677">
    <property type="term" value="F:DNA binding"/>
    <property type="evidence" value="ECO:0007669"/>
    <property type="project" value="InterPro"/>
</dbReference>
<dbReference type="GO" id="GO:0004519">
    <property type="term" value="F:endonuclease activity"/>
    <property type="evidence" value="ECO:0007669"/>
    <property type="project" value="UniProtKB-UniRule"/>
</dbReference>
<dbReference type="GO" id="GO:0006304">
    <property type="term" value="P:DNA modification"/>
    <property type="evidence" value="ECO:0007669"/>
    <property type="project" value="InterPro"/>
</dbReference>
<dbReference type="GO" id="GO:0006298">
    <property type="term" value="P:mismatch repair"/>
    <property type="evidence" value="ECO:0007669"/>
    <property type="project" value="UniProtKB-UniRule"/>
</dbReference>
<dbReference type="CDD" id="cd00583">
    <property type="entry name" value="MutH-like"/>
    <property type="match status" value="1"/>
</dbReference>
<dbReference type="Gene3D" id="3.40.600.10">
    <property type="entry name" value="DNA mismatch repair MutH/Restriction endonuclease, type II"/>
    <property type="match status" value="1"/>
</dbReference>
<dbReference type="HAMAP" id="MF_00759">
    <property type="entry name" value="MutH"/>
    <property type="match status" value="1"/>
</dbReference>
<dbReference type="InterPro" id="IPR004230">
    <property type="entry name" value="DNA_mismatch_repair_MutH"/>
</dbReference>
<dbReference type="InterPro" id="IPR011337">
    <property type="entry name" value="DNA_rep_MutH/RE_typeII_Sau3AI"/>
</dbReference>
<dbReference type="InterPro" id="IPR037057">
    <property type="entry name" value="DNA_rep_MutH/T2_RE_sf"/>
</dbReference>
<dbReference type="InterPro" id="IPR011335">
    <property type="entry name" value="Restrct_endonuc-II-like"/>
</dbReference>
<dbReference type="NCBIfam" id="TIGR02248">
    <property type="entry name" value="mutH_TIGR"/>
    <property type="match status" value="1"/>
</dbReference>
<dbReference type="NCBIfam" id="NF003458">
    <property type="entry name" value="PRK05070.1"/>
    <property type="match status" value="1"/>
</dbReference>
<dbReference type="Pfam" id="PF02976">
    <property type="entry name" value="MutH"/>
    <property type="match status" value="1"/>
</dbReference>
<dbReference type="SMART" id="SM00927">
    <property type="entry name" value="MutH"/>
    <property type="match status" value="1"/>
</dbReference>
<dbReference type="SUPFAM" id="SSF52980">
    <property type="entry name" value="Restriction endonuclease-like"/>
    <property type="match status" value="1"/>
</dbReference>
<sequence>MTTPHSPKTIDELMSRANDMAGLTLGQLADSHGFITPANLKRDKGWVGQLIEHELGALAGSRPEPDFLHLGIELKTIPVDKNGKPIETTYVTVAPLIDIQGLTWETSVVCHKLQTVLWIPIQGDRDIPVSQRQIGSPILWRPNEEELALLKQDWEEIMEFIALGQVKQLTARHGEVLQLRPKGANSRSVTQSIGPNGSTQMTNPRGFYLKIPFTQSILSRAFGIYTQATSR</sequence>
<accession>B1KI41</accession>